<comment type="function">
    <text evidence="1">Multidrug efflux pump.</text>
</comment>
<comment type="subcellular location">
    <subcellularLocation>
        <location evidence="1">Cell inner membrane</location>
        <topology evidence="1">Multi-pass membrane protein</topology>
    </subcellularLocation>
</comment>
<comment type="similarity">
    <text evidence="3">Belongs to the multi antimicrobial extrusion (MATE) (TC 2.A.66.1) family.</text>
</comment>
<reference key="1">
    <citation type="journal article" date="2004" name="Proc. Natl. Acad. Sci. U.S.A.">
        <title>Genome sequence of the deep-sea gamma-proteobacterium Idiomarina loihiensis reveals amino acid fermentation as a source of carbon and energy.</title>
        <authorList>
            <person name="Hou S."/>
            <person name="Saw J.H."/>
            <person name="Lee K.S."/>
            <person name="Freitas T.A."/>
            <person name="Belisle C."/>
            <person name="Kawarabayasi Y."/>
            <person name="Donachie S.P."/>
            <person name="Pikina A."/>
            <person name="Galperin M.Y."/>
            <person name="Koonin E.V."/>
            <person name="Makarova K.S."/>
            <person name="Omelchenko M.V."/>
            <person name="Sorokin A."/>
            <person name="Wolf Y.I."/>
            <person name="Li Q.X."/>
            <person name="Keum Y.S."/>
            <person name="Campbell S."/>
            <person name="Denery J."/>
            <person name="Aizawa S."/>
            <person name="Shibata S."/>
            <person name="Malahoff A."/>
            <person name="Alam M."/>
        </authorList>
    </citation>
    <scope>NUCLEOTIDE SEQUENCE [LARGE SCALE GENOMIC DNA]</scope>
    <source>
        <strain>ATCC BAA-735 / DSM 15497 / L2-TR</strain>
    </source>
</reference>
<feature type="chain" id="PRO_0000164220" description="Probable multidrug resistance protein NorM">
    <location>
        <begin position="1"/>
        <end position="462"/>
    </location>
</feature>
<feature type="transmembrane region" description="Helical" evidence="2">
    <location>
        <begin position="56"/>
        <end position="78"/>
    </location>
</feature>
<feature type="transmembrane region" description="Helical" evidence="2">
    <location>
        <begin position="90"/>
        <end position="112"/>
    </location>
</feature>
<feature type="transmembrane region" description="Helical" evidence="2">
    <location>
        <begin position="127"/>
        <end position="149"/>
    </location>
</feature>
<feature type="transmembrane region" description="Helical" evidence="2">
    <location>
        <begin position="161"/>
        <end position="183"/>
    </location>
</feature>
<feature type="transmembrane region" description="Helical" evidence="2">
    <location>
        <begin position="193"/>
        <end position="215"/>
    </location>
</feature>
<feature type="transmembrane region" description="Helical" evidence="2">
    <location>
        <begin position="243"/>
        <end position="265"/>
    </location>
</feature>
<feature type="transmembrane region" description="Helical" evidence="2">
    <location>
        <begin position="285"/>
        <end position="307"/>
    </location>
</feature>
<feature type="transmembrane region" description="Helical" evidence="2">
    <location>
        <begin position="319"/>
        <end position="341"/>
    </location>
</feature>
<feature type="transmembrane region" description="Helical" evidence="2">
    <location>
        <begin position="356"/>
        <end position="378"/>
    </location>
</feature>
<feature type="transmembrane region" description="Helical" evidence="2">
    <location>
        <begin position="391"/>
        <end position="410"/>
    </location>
</feature>
<feature type="transmembrane region" description="Helical" evidence="2">
    <location>
        <begin position="420"/>
        <end position="442"/>
    </location>
</feature>
<keyword id="KW-0050">Antiport</keyword>
<keyword id="KW-0997">Cell inner membrane</keyword>
<keyword id="KW-1003">Cell membrane</keyword>
<keyword id="KW-0406">Ion transport</keyword>
<keyword id="KW-0472">Membrane</keyword>
<keyword id="KW-1185">Reference proteome</keyword>
<keyword id="KW-0812">Transmembrane</keyword>
<keyword id="KW-1133">Transmembrane helix</keyword>
<keyword id="KW-0813">Transport</keyword>
<evidence type="ECO:0000250" key="1"/>
<evidence type="ECO:0000255" key="2"/>
<evidence type="ECO:0000305" key="3"/>
<dbReference type="EMBL" id="AE017340">
    <property type="protein sequence ID" value="AAV82674.1"/>
    <property type="molecule type" value="Genomic_DNA"/>
</dbReference>
<dbReference type="RefSeq" id="WP_011235074.1">
    <property type="nucleotide sequence ID" value="NC_006512.1"/>
</dbReference>
<dbReference type="SMR" id="Q5QWR6"/>
<dbReference type="STRING" id="283942.IL1842"/>
<dbReference type="DNASU" id="3171968"/>
<dbReference type="GeneID" id="41337026"/>
<dbReference type="KEGG" id="ilo:IL1842"/>
<dbReference type="eggNOG" id="COG0534">
    <property type="taxonomic scope" value="Bacteria"/>
</dbReference>
<dbReference type="HOGENOM" id="CLU_012893_6_0_6"/>
<dbReference type="OrthoDB" id="9780160at2"/>
<dbReference type="Proteomes" id="UP000001171">
    <property type="component" value="Chromosome"/>
</dbReference>
<dbReference type="GO" id="GO:0005886">
    <property type="term" value="C:plasma membrane"/>
    <property type="evidence" value="ECO:0007669"/>
    <property type="project" value="UniProtKB-SubCell"/>
</dbReference>
<dbReference type="GO" id="GO:0015297">
    <property type="term" value="F:antiporter activity"/>
    <property type="evidence" value="ECO:0007669"/>
    <property type="project" value="UniProtKB-KW"/>
</dbReference>
<dbReference type="GO" id="GO:0042910">
    <property type="term" value="F:xenobiotic transmembrane transporter activity"/>
    <property type="evidence" value="ECO:0007669"/>
    <property type="project" value="InterPro"/>
</dbReference>
<dbReference type="GO" id="GO:0006811">
    <property type="term" value="P:monoatomic ion transport"/>
    <property type="evidence" value="ECO:0007669"/>
    <property type="project" value="UniProtKB-KW"/>
</dbReference>
<dbReference type="CDD" id="cd13131">
    <property type="entry name" value="MATE_NorM_like"/>
    <property type="match status" value="1"/>
</dbReference>
<dbReference type="InterPro" id="IPR002528">
    <property type="entry name" value="MATE_fam"/>
</dbReference>
<dbReference type="InterPro" id="IPR050222">
    <property type="entry name" value="MATE_MdtK"/>
</dbReference>
<dbReference type="InterPro" id="IPR048279">
    <property type="entry name" value="MdtK-like"/>
</dbReference>
<dbReference type="NCBIfam" id="TIGR00797">
    <property type="entry name" value="matE"/>
    <property type="match status" value="1"/>
</dbReference>
<dbReference type="PANTHER" id="PTHR43298:SF2">
    <property type="entry name" value="FMN_FAD EXPORTER YEEO-RELATED"/>
    <property type="match status" value="1"/>
</dbReference>
<dbReference type="PANTHER" id="PTHR43298">
    <property type="entry name" value="MULTIDRUG RESISTANCE PROTEIN NORM-RELATED"/>
    <property type="match status" value="1"/>
</dbReference>
<dbReference type="Pfam" id="PF01554">
    <property type="entry name" value="MatE"/>
    <property type="match status" value="2"/>
</dbReference>
<dbReference type="PIRSF" id="PIRSF006603">
    <property type="entry name" value="DinF"/>
    <property type="match status" value="1"/>
</dbReference>
<gene>
    <name type="primary">norM</name>
    <name type="ordered locus">IL1842</name>
</gene>
<organism>
    <name type="scientific">Idiomarina loihiensis (strain ATCC BAA-735 / DSM 15497 / L2-TR)</name>
    <dbReference type="NCBI Taxonomy" id="283942"/>
    <lineage>
        <taxon>Bacteria</taxon>
        <taxon>Pseudomonadati</taxon>
        <taxon>Pseudomonadota</taxon>
        <taxon>Gammaproteobacteria</taxon>
        <taxon>Alteromonadales</taxon>
        <taxon>Idiomarinaceae</taxon>
        <taxon>Idiomarina</taxon>
    </lineage>
</organism>
<protein>
    <recommendedName>
        <fullName>Probable multidrug resistance protein NorM</fullName>
    </recommendedName>
    <alternativeName>
        <fullName>Multidrug-efflux transporter</fullName>
    </alternativeName>
</protein>
<accession>Q5QWR6</accession>
<proteinExistence type="inferred from homology"/>
<sequence>MNWWTNNKGEFNKLAKLTGPILVAQLTQMLMSVVDTVMAGRKGALDLAAVSVGGSIFVPATLLVFGLALALAPIISHLDGSNSHRRIANILQQGLYACAIVGVITLIGMSSAPWLLDIMEVEDDFRAITLDYLFYISWGIPGFVIYAVLRNFCEGLSNTMPSLIIGFIGLLINIPANYIFVYGKFGMPELGGAGCGLATAIVLWGMALSMVVYTFTAKRYKRLRLLRRWYRPNWDDVTYVIRIGFPISMSLFFEVSLFAAVALLIAPLGPTVVSAHQIALNISSLVYMVPLSISMAVTLRVGFALGAGNPKNAMLSFKLAMLFGGVFAGVNGLIMYLGGGWLASLYTPDKDIINLAATLMGLAAIFTVSDTFQAISIGTLRGYKDTKYPMILAFISYWPFGLTVGYILGLTDWVVPAMGAAGFWIGFISGLSVAAVLLSLRLRRVSRRYERKHFREQLNSAA</sequence>
<name>NORM_IDILO</name>